<accession>A0T0F3</accession>
<name>PSAE_PHATC</name>
<feature type="chain" id="PRO_0000276011" description="Photosystem I reaction center subunit IV">
    <location>
        <begin position="1"/>
        <end position="69"/>
    </location>
</feature>
<organism>
    <name type="scientific">Phaeodactylum tricornutum (strain CCAP 1055/1)</name>
    <dbReference type="NCBI Taxonomy" id="556484"/>
    <lineage>
        <taxon>Eukaryota</taxon>
        <taxon>Sar</taxon>
        <taxon>Stramenopiles</taxon>
        <taxon>Ochrophyta</taxon>
        <taxon>Bacillariophyta</taxon>
        <taxon>Bacillariophyceae</taxon>
        <taxon>Bacillariophycidae</taxon>
        <taxon>Naviculales</taxon>
        <taxon>Phaeodactylaceae</taxon>
        <taxon>Phaeodactylum</taxon>
    </lineage>
</organism>
<gene>
    <name evidence="1" type="primary">psaE</name>
</gene>
<keyword id="KW-0150">Chloroplast</keyword>
<keyword id="KW-0472">Membrane</keyword>
<keyword id="KW-0602">Photosynthesis</keyword>
<keyword id="KW-0603">Photosystem I</keyword>
<keyword id="KW-0934">Plastid</keyword>
<keyword id="KW-1185">Reference proteome</keyword>
<keyword id="KW-0793">Thylakoid</keyword>
<protein>
    <recommendedName>
        <fullName evidence="1">Photosystem I reaction center subunit IV</fullName>
        <shortName evidence="1">PSI-E</shortName>
    </recommendedName>
</protein>
<geneLocation type="chloroplast"/>
<reference key="1">
    <citation type="journal article" date="2007" name="Mol. Genet. Genomics">
        <title>Chloroplast genomes of the diatoms Phaeodactylum tricornutum and Thalassiosira pseudonana: comparison with other plastid genomes of the red lineage.</title>
        <authorList>
            <person name="Oudot-Le Secq M.-P."/>
            <person name="Grimwood J."/>
            <person name="Shapiro H."/>
            <person name="Armbrust E.V."/>
            <person name="Bowler C."/>
            <person name="Green B.R."/>
        </authorList>
    </citation>
    <scope>NUCLEOTIDE SEQUENCE [LARGE SCALE GENOMIC DNA]</scope>
    <source>
        <strain>CCAP 1055/1</strain>
    </source>
</reference>
<dbReference type="EMBL" id="EF067920">
    <property type="protein sequence ID" value="ABK20651.1"/>
    <property type="molecule type" value="Genomic_DNA"/>
</dbReference>
<dbReference type="RefSeq" id="YP_874428.1">
    <property type="nucleotide sequence ID" value="NC_008588.1"/>
</dbReference>
<dbReference type="SMR" id="A0T0F3"/>
<dbReference type="STRING" id="556484.A0T0F3"/>
<dbReference type="GeneID" id="4524633"/>
<dbReference type="InParanoid" id="A0T0F3"/>
<dbReference type="Proteomes" id="UP000000759">
    <property type="component" value="Chloroplast"/>
</dbReference>
<dbReference type="GO" id="GO:0009535">
    <property type="term" value="C:chloroplast thylakoid membrane"/>
    <property type="evidence" value="ECO:0007669"/>
    <property type="project" value="UniProtKB-SubCell"/>
</dbReference>
<dbReference type="GO" id="GO:0009538">
    <property type="term" value="C:photosystem I reaction center"/>
    <property type="evidence" value="ECO:0007669"/>
    <property type="project" value="InterPro"/>
</dbReference>
<dbReference type="GO" id="GO:0015979">
    <property type="term" value="P:photosynthesis"/>
    <property type="evidence" value="ECO:0007669"/>
    <property type="project" value="UniProtKB-UniRule"/>
</dbReference>
<dbReference type="Gene3D" id="2.30.30.50">
    <property type="match status" value="1"/>
</dbReference>
<dbReference type="HAMAP" id="MF_00613">
    <property type="entry name" value="PSI_PsaE"/>
    <property type="match status" value="1"/>
</dbReference>
<dbReference type="InterPro" id="IPR008990">
    <property type="entry name" value="Elect_transpt_acc-like_dom_sf"/>
</dbReference>
<dbReference type="InterPro" id="IPR003375">
    <property type="entry name" value="PSI_PsaE"/>
</dbReference>
<dbReference type="NCBIfam" id="NF002745">
    <property type="entry name" value="PRK02749.1"/>
    <property type="match status" value="1"/>
</dbReference>
<dbReference type="PANTHER" id="PTHR34549">
    <property type="entry name" value="PHOTOSYSTEM I REACTION CENTER SUBUNIT IV A, CHLOROPLASTIC-RELATED"/>
    <property type="match status" value="1"/>
</dbReference>
<dbReference type="PANTHER" id="PTHR34549:SF2">
    <property type="entry name" value="PHOTOSYSTEM I SUBUNIT IV"/>
    <property type="match status" value="1"/>
</dbReference>
<dbReference type="Pfam" id="PF02427">
    <property type="entry name" value="PSI_PsaE"/>
    <property type="match status" value="1"/>
</dbReference>
<dbReference type="SUPFAM" id="SSF50090">
    <property type="entry name" value="Electron transport accessory proteins"/>
    <property type="match status" value="1"/>
</dbReference>
<evidence type="ECO:0000255" key="1">
    <source>
        <dbReference type="HAMAP-Rule" id="MF_00613"/>
    </source>
</evidence>
<sequence>MIDRGSEVRILREESYWFNEVGTVATVDQSGIRYPAVVRFEKVNYSGTNTNNFALSELVEVSSPKKKDK</sequence>
<comment type="function">
    <text evidence="1">Stabilizes the interaction between PsaC and the PSI core, assists the docking of the ferredoxin to PSI and interacts with ferredoxin-NADP oxidoreductase.</text>
</comment>
<comment type="subcellular location">
    <subcellularLocation>
        <location evidence="1">Plastid</location>
        <location evidence="1">Chloroplast thylakoid membrane</location>
        <topology evidence="1">Peripheral membrane protein</topology>
    </subcellularLocation>
</comment>
<comment type="similarity">
    <text evidence="1">Belongs to the PsaE family.</text>
</comment>
<proteinExistence type="inferred from homology"/>